<protein>
    <recommendedName>
        <fullName evidence="1">Translation initiation factor IF-1</fullName>
    </recommendedName>
</protein>
<gene>
    <name evidence="1" type="primary">infA</name>
    <name type="ordered locus">Nmul_A0788</name>
</gene>
<comment type="function">
    <text evidence="1">One of the essential components for the initiation of protein synthesis. Stabilizes the binding of IF-2 and IF-3 on the 30S subunit to which N-formylmethionyl-tRNA(fMet) subsequently binds. Helps modulate mRNA selection, yielding the 30S pre-initiation complex (PIC). Upon addition of the 50S ribosomal subunit IF-1, IF-2 and IF-3 are released leaving the mature 70S translation initiation complex.</text>
</comment>
<comment type="subunit">
    <text evidence="1">Component of the 30S ribosomal translation pre-initiation complex which assembles on the 30S ribosome in the order IF-2 and IF-3, IF-1 and N-formylmethionyl-tRNA(fMet); mRNA recruitment can occur at any time during PIC assembly.</text>
</comment>
<comment type="subcellular location">
    <subcellularLocation>
        <location evidence="1">Cytoplasm</location>
    </subcellularLocation>
</comment>
<comment type="similarity">
    <text evidence="1">Belongs to the IF-1 family.</text>
</comment>
<dbReference type="EMBL" id="CP000103">
    <property type="protein sequence ID" value="ABB74095.1"/>
    <property type="molecule type" value="Genomic_DNA"/>
</dbReference>
<dbReference type="RefSeq" id="WP_011380144.1">
    <property type="nucleotide sequence ID" value="NZ_FNVK01000003.1"/>
</dbReference>
<dbReference type="SMR" id="Q2YAX6"/>
<dbReference type="STRING" id="323848.Nmul_A0788"/>
<dbReference type="KEGG" id="nmu:Nmul_A0788"/>
<dbReference type="eggNOG" id="COG0361">
    <property type="taxonomic scope" value="Bacteria"/>
</dbReference>
<dbReference type="HOGENOM" id="CLU_151267_1_0_4"/>
<dbReference type="OrthoDB" id="9803250at2"/>
<dbReference type="Proteomes" id="UP000002718">
    <property type="component" value="Chromosome"/>
</dbReference>
<dbReference type="GO" id="GO:0005829">
    <property type="term" value="C:cytosol"/>
    <property type="evidence" value="ECO:0007669"/>
    <property type="project" value="TreeGrafter"/>
</dbReference>
<dbReference type="GO" id="GO:0043022">
    <property type="term" value="F:ribosome binding"/>
    <property type="evidence" value="ECO:0007669"/>
    <property type="project" value="UniProtKB-UniRule"/>
</dbReference>
<dbReference type="GO" id="GO:0019843">
    <property type="term" value="F:rRNA binding"/>
    <property type="evidence" value="ECO:0007669"/>
    <property type="project" value="UniProtKB-UniRule"/>
</dbReference>
<dbReference type="GO" id="GO:0003743">
    <property type="term" value="F:translation initiation factor activity"/>
    <property type="evidence" value="ECO:0007669"/>
    <property type="project" value="UniProtKB-UniRule"/>
</dbReference>
<dbReference type="CDD" id="cd04451">
    <property type="entry name" value="S1_IF1"/>
    <property type="match status" value="1"/>
</dbReference>
<dbReference type="FunFam" id="2.40.50.140:FF:000002">
    <property type="entry name" value="Translation initiation factor IF-1"/>
    <property type="match status" value="1"/>
</dbReference>
<dbReference type="Gene3D" id="2.40.50.140">
    <property type="entry name" value="Nucleic acid-binding proteins"/>
    <property type="match status" value="1"/>
</dbReference>
<dbReference type="HAMAP" id="MF_00075">
    <property type="entry name" value="IF_1"/>
    <property type="match status" value="1"/>
</dbReference>
<dbReference type="InterPro" id="IPR012340">
    <property type="entry name" value="NA-bd_OB-fold"/>
</dbReference>
<dbReference type="InterPro" id="IPR006196">
    <property type="entry name" value="RNA-binding_domain_S1_IF1"/>
</dbReference>
<dbReference type="InterPro" id="IPR004368">
    <property type="entry name" value="TIF_IF1"/>
</dbReference>
<dbReference type="NCBIfam" id="TIGR00008">
    <property type="entry name" value="infA"/>
    <property type="match status" value="1"/>
</dbReference>
<dbReference type="PANTHER" id="PTHR33370">
    <property type="entry name" value="TRANSLATION INITIATION FACTOR IF-1, CHLOROPLASTIC"/>
    <property type="match status" value="1"/>
</dbReference>
<dbReference type="PANTHER" id="PTHR33370:SF1">
    <property type="entry name" value="TRANSLATION INITIATION FACTOR IF-1, CHLOROPLASTIC"/>
    <property type="match status" value="1"/>
</dbReference>
<dbReference type="Pfam" id="PF01176">
    <property type="entry name" value="eIF-1a"/>
    <property type="match status" value="1"/>
</dbReference>
<dbReference type="SUPFAM" id="SSF50249">
    <property type="entry name" value="Nucleic acid-binding proteins"/>
    <property type="match status" value="1"/>
</dbReference>
<dbReference type="PROSITE" id="PS50832">
    <property type="entry name" value="S1_IF1_TYPE"/>
    <property type="match status" value="1"/>
</dbReference>
<feature type="chain" id="PRO_0000263830" description="Translation initiation factor IF-1">
    <location>
        <begin position="1"/>
        <end position="72"/>
    </location>
</feature>
<feature type="domain" description="S1-like" evidence="1">
    <location>
        <begin position="1"/>
        <end position="72"/>
    </location>
</feature>
<organism>
    <name type="scientific">Nitrosospira multiformis (strain ATCC 25196 / NCIMB 11849 / C 71)</name>
    <dbReference type="NCBI Taxonomy" id="323848"/>
    <lineage>
        <taxon>Bacteria</taxon>
        <taxon>Pseudomonadati</taxon>
        <taxon>Pseudomonadota</taxon>
        <taxon>Betaproteobacteria</taxon>
        <taxon>Nitrosomonadales</taxon>
        <taxon>Nitrosomonadaceae</taxon>
        <taxon>Nitrosospira</taxon>
    </lineage>
</organism>
<evidence type="ECO:0000255" key="1">
    <source>
        <dbReference type="HAMAP-Rule" id="MF_00075"/>
    </source>
</evidence>
<keyword id="KW-0963">Cytoplasm</keyword>
<keyword id="KW-0396">Initiation factor</keyword>
<keyword id="KW-0648">Protein biosynthesis</keyword>
<keyword id="KW-1185">Reference proteome</keyword>
<keyword id="KW-0694">RNA-binding</keyword>
<keyword id="KW-0699">rRNA-binding</keyword>
<sequence length="72" mass="8251">MAKEETIQMQGEILETLPNATFRVKLENGHIVLGHISGKMRMHYIRILPGDKVTVDLTPYDLSRARITFRAK</sequence>
<reference key="1">
    <citation type="submission" date="2005-08" db="EMBL/GenBank/DDBJ databases">
        <title>Complete sequence of chromosome 1 of Nitrosospira multiformis ATCC 25196.</title>
        <authorList>
            <person name="Copeland A."/>
            <person name="Lucas S."/>
            <person name="Lapidus A."/>
            <person name="Barry K."/>
            <person name="Detter J.C."/>
            <person name="Glavina T."/>
            <person name="Hammon N."/>
            <person name="Israni S."/>
            <person name="Pitluck S."/>
            <person name="Chain P."/>
            <person name="Malfatti S."/>
            <person name="Shin M."/>
            <person name="Vergez L."/>
            <person name="Schmutz J."/>
            <person name="Larimer F."/>
            <person name="Land M."/>
            <person name="Hauser L."/>
            <person name="Kyrpides N."/>
            <person name="Lykidis A."/>
            <person name="Richardson P."/>
        </authorList>
    </citation>
    <scope>NUCLEOTIDE SEQUENCE [LARGE SCALE GENOMIC DNA]</scope>
    <source>
        <strain>ATCC 25196 / NCIMB 11849 / C 71</strain>
    </source>
</reference>
<accession>Q2YAX6</accession>
<proteinExistence type="inferred from homology"/>
<name>IF1_NITMU</name>